<protein>
    <recommendedName>
        <fullName evidence="1">Small ribosomal subunit protein uS2</fullName>
    </recommendedName>
    <alternativeName>
        <fullName evidence="3">30S ribosomal protein S2</fullName>
    </alternativeName>
</protein>
<sequence length="313" mass="34495">MITLTQKDLLKAGVHLGHLSRKWNPSMAPFIFMESRGIHIIDLNKTLSQLQEAADTLQAVARSGKKILFVATKKQAKELVAQTAKSLNMPYMTERWLGGTLTNFITIRRLIKKLTSMERMMKSATYKNMAKKEQLMIARDKDKLERVLGGVLDLTKLPGALVVVDIMKESIAVQEARKLGIPIIALADTNVDPDLVDYPIPSNDDATPAIELIVRTLGEAINEGLSMRQEDKAAEAQDKDAQDTEDNKGARPRGAEKVAYSDADSEEDNAYGIAVKASKNKTAEPVERFKKSRTPVKGSRPIGVSKAGDKPKK</sequence>
<accession>B3EU84</accession>
<comment type="similarity">
    <text evidence="1">Belongs to the universal ribosomal protein uS2 family.</text>
</comment>
<proteinExistence type="inferred from homology"/>
<gene>
    <name evidence="1" type="primary">rpsB</name>
    <name type="ordered locus">Aasi_0050</name>
</gene>
<feature type="chain" id="PRO_1000114988" description="Small ribosomal subunit protein uS2">
    <location>
        <begin position="1"/>
        <end position="313"/>
    </location>
</feature>
<feature type="region of interest" description="Disordered" evidence="2">
    <location>
        <begin position="228"/>
        <end position="313"/>
    </location>
</feature>
<feature type="compositionally biased region" description="Basic and acidic residues" evidence="2">
    <location>
        <begin position="228"/>
        <end position="256"/>
    </location>
</feature>
<reference key="1">
    <citation type="journal article" date="2010" name="J. Bacteriol.">
        <title>The genome of the amoeba symbiont 'Candidatus Amoebophilus asiaticus' reveals common mechanisms for host cell interaction among amoeba-associated bacteria.</title>
        <authorList>
            <person name="Schmitz-Esser S."/>
            <person name="Tischler P."/>
            <person name="Arnold R."/>
            <person name="Montanaro J."/>
            <person name="Wagner M."/>
            <person name="Rattei T."/>
            <person name="Horn M."/>
        </authorList>
    </citation>
    <scope>NUCLEOTIDE SEQUENCE [LARGE SCALE GENOMIC DNA]</scope>
    <source>
        <strain>5a2</strain>
    </source>
</reference>
<organism>
    <name type="scientific">Amoebophilus asiaticus (strain 5a2)</name>
    <dbReference type="NCBI Taxonomy" id="452471"/>
    <lineage>
        <taxon>Bacteria</taxon>
        <taxon>Pseudomonadati</taxon>
        <taxon>Bacteroidota</taxon>
        <taxon>Cytophagia</taxon>
        <taxon>Cytophagales</taxon>
        <taxon>Amoebophilaceae</taxon>
        <taxon>Candidatus Amoebophilus</taxon>
    </lineage>
</organism>
<dbReference type="EMBL" id="CP001102">
    <property type="protein sequence ID" value="ACE05503.1"/>
    <property type="molecule type" value="Genomic_DNA"/>
</dbReference>
<dbReference type="RefSeq" id="WP_012472275.1">
    <property type="nucleotide sequence ID" value="NC_010830.1"/>
</dbReference>
<dbReference type="SMR" id="B3EU84"/>
<dbReference type="STRING" id="452471.Aasi_0050"/>
<dbReference type="KEGG" id="aas:Aasi_0050"/>
<dbReference type="eggNOG" id="COG0052">
    <property type="taxonomic scope" value="Bacteria"/>
</dbReference>
<dbReference type="HOGENOM" id="CLU_040318_0_2_10"/>
<dbReference type="OrthoDB" id="9808036at2"/>
<dbReference type="Proteomes" id="UP000001227">
    <property type="component" value="Chromosome"/>
</dbReference>
<dbReference type="GO" id="GO:0022627">
    <property type="term" value="C:cytosolic small ribosomal subunit"/>
    <property type="evidence" value="ECO:0007669"/>
    <property type="project" value="TreeGrafter"/>
</dbReference>
<dbReference type="GO" id="GO:0003735">
    <property type="term" value="F:structural constituent of ribosome"/>
    <property type="evidence" value="ECO:0007669"/>
    <property type="project" value="InterPro"/>
</dbReference>
<dbReference type="GO" id="GO:0006412">
    <property type="term" value="P:translation"/>
    <property type="evidence" value="ECO:0007669"/>
    <property type="project" value="UniProtKB-UniRule"/>
</dbReference>
<dbReference type="CDD" id="cd01425">
    <property type="entry name" value="RPS2"/>
    <property type="match status" value="1"/>
</dbReference>
<dbReference type="Gene3D" id="3.40.50.10490">
    <property type="entry name" value="Glucose-6-phosphate isomerase like protein, domain 1"/>
    <property type="match status" value="1"/>
</dbReference>
<dbReference type="Gene3D" id="1.10.287.610">
    <property type="entry name" value="Helix hairpin bin"/>
    <property type="match status" value="1"/>
</dbReference>
<dbReference type="HAMAP" id="MF_00291_B">
    <property type="entry name" value="Ribosomal_uS2_B"/>
    <property type="match status" value="1"/>
</dbReference>
<dbReference type="InterPro" id="IPR001865">
    <property type="entry name" value="Ribosomal_uS2"/>
</dbReference>
<dbReference type="InterPro" id="IPR005706">
    <property type="entry name" value="Ribosomal_uS2_bac/mit/plastid"/>
</dbReference>
<dbReference type="InterPro" id="IPR018130">
    <property type="entry name" value="Ribosomal_uS2_CS"/>
</dbReference>
<dbReference type="InterPro" id="IPR023591">
    <property type="entry name" value="Ribosomal_uS2_flav_dom_sf"/>
</dbReference>
<dbReference type="NCBIfam" id="TIGR01011">
    <property type="entry name" value="rpsB_bact"/>
    <property type="match status" value="1"/>
</dbReference>
<dbReference type="PANTHER" id="PTHR12534">
    <property type="entry name" value="30S RIBOSOMAL PROTEIN S2 PROKARYOTIC AND ORGANELLAR"/>
    <property type="match status" value="1"/>
</dbReference>
<dbReference type="PANTHER" id="PTHR12534:SF0">
    <property type="entry name" value="SMALL RIBOSOMAL SUBUNIT PROTEIN US2M"/>
    <property type="match status" value="1"/>
</dbReference>
<dbReference type="Pfam" id="PF00318">
    <property type="entry name" value="Ribosomal_S2"/>
    <property type="match status" value="1"/>
</dbReference>
<dbReference type="PRINTS" id="PR00395">
    <property type="entry name" value="RIBOSOMALS2"/>
</dbReference>
<dbReference type="SUPFAM" id="SSF52313">
    <property type="entry name" value="Ribosomal protein S2"/>
    <property type="match status" value="1"/>
</dbReference>
<dbReference type="PROSITE" id="PS00963">
    <property type="entry name" value="RIBOSOMAL_S2_2"/>
    <property type="match status" value="1"/>
</dbReference>
<name>RS2_AMOA5</name>
<evidence type="ECO:0000255" key="1">
    <source>
        <dbReference type="HAMAP-Rule" id="MF_00291"/>
    </source>
</evidence>
<evidence type="ECO:0000256" key="2">
    <source>
        <dbReference type="SAM" id="MobiDB-lite"/>
    </source>
</evidence>
<evidence type="ECO:0000305" key="3"/>
<keyword id="KW-1185">Reference proteome</keyword>
<keyword id="KW-0687">Ribonucleoprotein</keyword>
<keyword id="KW-0689">Ribosomal protein</keyword>